<comment type="function">
    <text evidence="1">Component of the FTS/Hook/FHIP complex (FHF complex). The FHF complex may function to promote vesicle trafficking and/or fusion via the homotypic vesicular protein sorting complex (the HOPS complex). Regulates apoptosis by enhancing phosphorylation and activation of AKT1. Increases release of TNFSF6 via the AKT1/GSK3B/NFATC1 signaling cascade. FHF complex promotes the distribution of AP-4 complex to the perinuclear area of the cell.</text>
</comment>
<comment type="subunit">
    <text evidence="1">Component of the FTS/Hook/FHIP complex (FHF complex), composed of AKTIP/FTS, FHIP1B, and one or more members of the Hook family of proteins HOOK1, HOOK2, and HOOK3. Interacts directly with HOOK1, HOOK2 and HOOK3. The FHF complex associates with the homotypic vesicular sorting complex (the HOPS complex). Also interacts with AKT1. May interact with FHIP1A.</text>
</comment>
<comment type="subcellular location">
    <subcellularLocation>
        <location evidence="1">Cytoplasm</location>
    </subcellularLocation>
    <subcellularLocation>
        <location evidence="1">Cell membrane</location>
        <topology evidence="1">Peripheral membrane protein</topology>
    </subcellularLocation>
</comment>
<comment type="tissue specificity">
    <text evidence="5">Ubiquitous. Highest expression in kidney, testis and brain and lowest in spleen and liver.</text>
</comment>
<comment type="disease">
    <text evidence="4">Defects in Aktip are a cause of embryonic death in homozygous animals. Death occurs at about 10 days of development. Symptoms include loss of left-right asymmetry, malformation of the developing brain and of the spinal cord, syndactyly and polydactyly. Heterozygous animals are characterized by polydactyly and thymic hyperplasia.</text>
</comment>
<comment type="similarity">
    <text evidence="2">Belongs to the ubiquitin-conjugating enzyme family. FTS subfamily.</text>
</comment>
<comment type="caution">
    <text evidence="6">Lacks the conserved Cys residue necessary for ubiquitin-conjugating enzyme E2 activity.</text>
</comment>
<evidence type="ECO:0000250" key="1">
    <source>
        <dbReference type="UniProtKB" id="Q9H8T0"/>
    </source>
</evidence>
<evidence type="ECO:0000255" key="2">
    <source>
        <dbReference type="PROSITE-ProRule" id="PRU00388"/>
    </source>
</evidence>
<evidence type="ECO:0000256" key="3">
    <source>
        <dbReference type="SAM" id="MobiDB-lite"/>
    </source>
</evidence>
<evidence type="ECO:0000269" key="4">
    <source>
    </source>
</evidence>
<evidence type="ECO:0000269" key="5">
    <source>
    </source>
</evidence>
<evidence type="ECO:0000305" key="6"/>
<evidence type="ECO:0007744" key="7">
    <source>
    </source>
</evidence>
<name>AKTIP_MOUSE</name>
<proteinExistence type="evidence at protein level"/>
<dbReference type="EMBL" id="Z67963">
    <property type="protein sequence ID" value="CAA91902.1"/>
    <property type="molecule type" value="mRNA"/>
</dbReference>
<dbReference type="EMBL" id="X71978">
    <property type="protein sequence ID" value="CAA50800.1"/>
    <property type="molecule type" value="mRNA"/>
</dbReference>
<dbReference type="EMBL" id="AK146459">
    <property type="protein sequence ID" value="BAE27187.1"/>
    <property type="molecule type" value="mRNA"/>
</dbReference>
<dbReference type="EMBL" id="AK158704">
    <property type="protein sequence ID" value="BAE34620.1"/>
    <property type="molecule type" value="mRNA"/>
</dbReference>
<dbReference type="EMBL" id="CH466525">
    <property type="protein sequence ID" value="EDL11072.1"/>
    <property type="molecule type" value="Genomic_DNA"/>
</dbReference>
<dbReference type="EMBL" id="CH466525">
    <property type="protein sequence ID" value="EDL11073.1"/>
    <property type="molecule type" value="Genomic_DNA"/>
</dbReference>
<dbReference type="EMBL" id="BC008130">
    <property type="protein sequence ID" value="AAH08130.1"/>
    <property type="molecule type" value="mRNA"/>
</dbReference>
<dbReference type="CCDS" id="CCDS22519.1"/>
<dbReference type="PIR" id="S33513">
    <property type="entry name" value="S33513"/>
</dbReference>
<dbReference type="RefSeq" id="NP_001289195.1">
    <property type="nucleotide sequence ID" value="NM_001302266.1"/>
</dbReference>
<dbReference type="RefSeq" id="NP_001289196.1">
    <property type="nucleotide sequence ID" value="NM_001302267.1"/>
</dbReference>
<dbReference type="RefSeq" id="NP_001289197.1">
    <property type="nucleotide sequence ID" value="NM_001302268.1"/>
</dbReference>
<dbReference type="RefSeq" id="NP_001289266.1">
    <property type="nucleotide sequence ID" value="NM_001302337.1"/>
</dbReference>
<dbReference type="RefSeq" id="NP_001345866.1">
    <property type="nucleotide sequence ID" value="NM_001358937.1"/>
</dbReference>
<dbReference type="RefSeq" id="NP_001345867.1">
    <property type="nucleotide sequence ID" value="NM_001358938.1"/>
</dbReference>
<dbReference type="RefSeq" id="NP_034371.1">
    <property type="nucleotide sequence ID" value="NM_010241.5"/>
</dbReference>
<dbReference type="RefSeq" id="XP_017168061.1">
    <property type="nucleotide sequence ID" value="XM_017312572.1"/>
</dbReference>
<dbReference type="RefSeq" id="XP_017168062.1">
    <property type="nucleotide sequence ID" value="XM_017312573.1"/>
</dbReference>
<dbReference type="RefSeq" id="XP_030099149.1">
    <property type="nucleotide sequence ID" value="XM_030243289.2"/>
</dbReference>
<dbReference type="RefSeq" id="XP_030099150.1">
    <property type="nucleotide sequence ID" value="XM_030243290.1"/>
</dbReference>
<dbReference type="SMR" id="Q64362"/>
<dbReference type="BioGRID" id="199761">
    <property type="interactions" value="2"/>
</dbReference>
<dbReference type="FunCoup" id="Q64362">
    <property type="interactions" value="1428"/>
</dbReference>
<dbReference type="STRING" id="10090.ENSMUSP00000112375"/>
<dbReference type="iPTMnet" id="Q64362"/>
<dbReference type="PhosphoSitePlus" id="Q64362"/>
<dbReference type="jPOST" id="Q64362"/>
<dbReference type="PaxDb" id="10090-ENSMUSP00000113769"/>
<dbReference type="ProteomicsDB" id="282067"/>
<dbReference type="Pumba" id="Q64362"/>
<dbReference type="Antibodypedia" id="28404">
    <property type="antibodies" value="268 antibodies from 28 providers"/>
</dbReference>
<dbReference type="DNASU" id="14339"/>
<dbReference type="Ensembl" id="ENSMUST00000109609.9">
    <property type="protein sequence ID" value="ENSMUSP00000105238.3"/>
    <property type="gene ID" value="ENSMUSG00000031667.17"/>
</dbReference>
<dbReference type="Ensembl" id="ENSMUST00000120213.9">
    <property type="protein sequence ID" value="ENSMUSP00000112375.2"/>
    <property type="gene ID" value="ENSMUSG00000031667.17"/>
</dbReference>
<dbReference type="Ensembl" id="ENSMUST00000120349.8">
    <property type="protein sequence ID" value="ENSMUSP00000113769.2"/>
    <property type="gene ID" value="ENSMUSG00000031667.17"/>
</dbReference>
<dbReference type="Ensembl" id="ENSMUST00000125257.3">
    <property type="protein sequence ID" value="ENSMUSP00000119277.3"/>
    <property type="gene ID" value="ENSMUSG00000031667.17"/>
</dbReference>
<dbReference type="GeneID" id="14339"/>
<dbReference type="KEGG" id="mmu:14339"/>
<dbReference type="UCSC" id="uc009msl.2">
    <property type="organism name" value="mouse"/>
</dbReference>
<dbReference type="AGR" id="MGI:3693832"/>
<dbReference type="CTD" id="64400"/>
<dbReference type="MGI" id="MGI:3693832">
    <property type="gene designation" value="Aktip"/>
</dbReference>
<dbReference type="VEuPathDB" id="HostDB:ENSMUSG00000031667"/>
<dbReference type="eggNOG" id="KOG0429">
    <property type="taxonomic scope" value="Eukaryota"/>
</dbReference>
<dbReference type="GeneTree" id="ENSGT00390000010125"/>
<dbReference type="HOGENOM" id="CLU_083049_0_0_1"/>
<dbReference type="InParanoid" id="Q64362"/>
<dbReference type="OMA" id="WGFPEWR"/>
<dbReference type="OrthoDB" id="5596422at2759"/>
<dbReference type="PhylomeDB" id="Q64362"/>
<dbReference type="TreeFam" id="TF314386"/>
<dbReference type="BioGRID-ORCS" id="14339">
    <property type="hits" value="2 hits in 77 CRISPR screens"/>
</dbReference>
<dbReference type="ChiTaRS" id="Aktip">
    <property type="organism name" value="mouse"/>
</dbReference>
<dbReference type="PRO" id="PR:Q64362"/>
<dbReference type="Proteomes" id="UP000000589">
    <property type="component" value="Chromosome 8"/>
</dbReference>
<dbReference type="RNAct" id="Q64362">
    <property type="molecule type" value="protein"/>
</dbReference>
<dbReference type="Bgee" id="ENSMUSG00000031667">
    <property type="expression patterns" value="Expressed in right kidney and 288 other cell types or tissues"/>
</dbReference>
<dbReference type="ExpressionAtlas" id="Q64362">
    <property type="expression patterns" value="baseline and differential"/>
</dbReference>
<dbReference type="GO" id="GO:0070695">
    <property type="term" value="C:FHF complex"/>
    <property type="evidence" value="ECO:0000250"/>
    <property type="project" value="UniProtKB"/>
</dbReference>
<dbReference type="GO" id="GO:0030897">
    <property type="term" value="C:HOPS complex"/>
    <property type="evidence" value="ECO:0007669"/>
    <property type="project" value="Ensembl"/>
</dbReference>
<dbReference type="GO" id="GO:0005886">
    <property type="term" value="C:plasma membrane"/>
    <property type="evidence" value="ECO:0000266"/>
    <property type="project" value="MGI"/>
</dbReference>
<dbReference type="GO" id="GO:0006915">
    <property type="term" value="P:apoptotic process"/>
    <property type="evidence" value="ECO:0007669"/>
    <property type="project" value="UniProtKB-KW"/>
</dbReference>
<dbReference type="GO" id="GO:0045022">
    <property type="term" value="P:early endosome to late endosome transport"/>
    <property type="evidence" value="ECO:0000250"/>
    <property type="project" value="UniProtKB"/>
</dbReference>
<dbReference type="GO" id="GO:0007032">
    <property type="term" value="P:endosome organization"/>
    <property type="evidence" value="ECO:0000250"/>
    <property type="project" value="UniProtKB"/>
</dbReference>
<dbReference type="GO" id="GO:0008333">
    <property type="term" value="P:endosome to lysosome transport"/>
    <property type="evidence" value="ECO:0000250"/>
    <property type="project" value="UniProtKB"/>
</dbReference>
<dbReference type="GO" id="GO:0007040">
    <property type="term" value="P:lysosome organization"/>
    <property type="evidence" value="ECO:0000250"/>
    <property type="project" value="UniProtKB"/>
</dbReference>
<dbReference type="GO" id="GO:1905719">
    <property type="term" value="P:protein localization to perinuclear region of cytoplasm"/>
    <property type="evidence" value="ECO:0000250"/>
    <property type="project" value="UniProtKB"/>
</dbReference>
<dbReference type="GO" id="GO:0015031">
    <property type="term" value="P:protein transport"/>
    <property type="evidence" value="ECO:0007669"/>
    <property type="project" value="UniProtKB-KW"/>
</dbReference>
<dbReference type="CDD" id="cd23814">
    <property type="entry name" value="UEV_AKTIP"/>
    <property type="match status" value="1"/>
</dbReference>
<dbReference type="FunFam" id="3.10.110.10:FF:000030">
    <property type="entry name" value="AKT-interacting protein-like isoform X2"/>
    <property type="match status" value="1"/>
</dbReference>
<dbReference type="Gene3D" id="3.10.110.10">
    <property type="entry name" value="Ubiquitin Conjugating Enzyme"/>
    <property type="match status" value="1"/>
</dbReference>
<dbReference type="InterPro" id="IPR050113">
    <property type="entry name" value="Ub_conjugating_enzyme"/>
</dbReference>
<dbReference type="InterPro" id="IPR000608">
    <property type="entry name" value="UBQ-conjugat_E2_core"/>
</dbReference>
<dbReference type="InterPro" id="IPR016135">
    <property type="entry name" value="UBQ-conjugating_enzyme/RWD"/>
</dbReference>
<dbReference type="PANTHER" id="PTHR24067">
    <property type="entry name" value="UBIQUITIN-CONJUGATING ENZYME E2"/>
    <property type="match status" value="1"/>
</dbReference>
<dbReference type="Pfam" id="PF00179">
    <property type="entry name" value="UQ_con"/>
    <property type="match status" value="1"/>
</dbReference>
<dbReference type="SMART" id="SM00212">
    <property type="entry name" value="UBCc"/>
    <property type="match status" value="1"/>
</dbReference>
<dbReference type="SUPFAM" id="SSF54495">
    <property type="entry name" value="UBC-like"/>
    <property type="match status" value="1"/>
</dbReference>
<dbReference type="PROSITE" id="PS50127">
    <property type="entry name" value="UBC_2"/>
    <property type="match status" value="1"/>
</dbReference>
<organism>
    <name type="scientific">Mus musculus</name>
    <name type="common">Mouse</name>
    <dbReference type="NCBI Taxonomy" id="10090"/>
    <lineage>
        <taxon>Eukaryota</taxon>
        <taxon>Metazoa</taxon>
        <taxon>Chordata</taxon>
        <taxon>Craniata</taxon>
        <taxon>Vertebrata</taxon>
        <taxon>Euteleostomi</taxon>
        <taxon>Mammalia</taxon>
        <taxon>Eutheria</taxon>
        <taxon>Euarchontoglires</taxon>
        <taxon>Glires</taxon>
        <taxon>Rodentia</taxon>
        <taxon>Myomorpha</taxon>
        <taxon>Muroidea</taxon>
        <taxon>Muridae</taxon>
        <taxon>Murinae</taxon>
        <taxon>Mus</taxon>
        <taxon>Mus</taxon>
    </lineage>
</organism>
<protein>
    <recommendedName>
        <fullName>AKT-interacting protein</fullName>
    </recommendedName>
    <alternativeName>
        <fullName>FT1</fullName>
    </alternativeName>
    <alternativeName>
        <fullName>Fused toes protein</fullName>
    </alternativeName>
</protein>
<sequence length="292" mass="32942">MNPLWSMSAGSVRKRAEGEEKTLAGDVKTSPPRSAPKKQLPSIPKNALPIAKPTSPAPAAQSTNGTHASYGPFYLEYSLLAEFTLVVKQKLPGVYVQPSYRSALVWFGVIFIRHGLYQDGVFKFTVYIPDNYPDGDCPRLLFDIPVFHPLVDPTSGELDVKRAFAKWRRNHNHIWQVLMYARRVFYKIDTTSPLNPEAAVLYEKDIQLFKSKVVDSVKVCTARLFDQPKIEDPYAISFSPWNPSVHDEAREKMLTQKKPDEQHNKSVHVAGLSWVKPGSVQPFSKEEKTVAT</sequence>
<keyword id="KW-0053">Apoptosis</keyword>
<keyword id="KW-1003">Cell membrane</keyword>
<keyword id="KW-0963">Cytoplasm</keyword>
<keyword id="KW-0472">Membrane</keyword>
<keyword id="KW-0597">Phosphoprotein</keyword>
<keyword id="KW-0653">Protein transport</keyword>
<keyword id="KW-1185">Reference proteome</keyword>
<keyword id="KW-0813">Transport</keyword>
<reference key="1">
    <citation type="journal article" date="1997" name="Mamm. Genome">
        <title>Ft1, a novel gene related to ubiquitin conjugating enzymes, is deleted in the Fused toes mouse mutation.</title>
        <authorList>
            <person name="Lesche R."/>
            <person name="Peetz A."/>
            <person name="van der Hoeven F."/>
            <person name="Ruether U."/>
        </authorList>
    </citation>
    <scope>NUCLEOTIDE SEQUENCE [MRNA]</scope>
    <scope>TISSUE SPECIFICITY</scope>
    <source>
        <strain>C57BL/6J</strain>
    </source>
</reference>
<reference key="2">
    <citation type="journal article" date="2005" name="Science">
        <title>The transcriptional landscape of the mammalian genome.</title>
        <authorList>
            <person name="Carninci P."/>
            <person name="Kasukawa T."/>
            <person name="Katayama S."/>
            <person name="Gough J."/>
            <person name="Frith M.C."/>
            <person name="Maeda N."/>
            <person name="Oyama R."/>
            <person name="Ravasi T."/>
            <person name="Lenhard B."/>
            <person name="Wells C."/>
            <person name="Kodzius R."/>
            <person name="Shimokawa K."/>
            <person name="Bajic V.B."/>
            <person name="Brenner S.E."/>
            <person name="Batalov S."/>
            <person name="Forrest A.R."/>
            <person name="Zavolan M."/>
            <person name="Davis M.J."/>
            <person name="Wilming L.G."/>
            <person name="Aidinis V."/>
            <person name="Allen J.E."/>
            <person name="Ambesi-Impiombato A."/>
            <person name="Apweiler R."/>
            <person name="Aturaliya R.N."/>
            <person name="Bailey T.L."/>
            <person name="Bansal M."/>
            <person name="Baxter L."/>
            <person name="Beisel K.W."/>
            <person name="Bersano T."/>
            <person name="Bono H."/>
            <person name="Chalk A.M."/>
            <person name="Chiu K.P."/>
            <person name="Choudhary V."/>
            <person name="Christoffels A."/>
            <person name="Clutterbuck D.R."/>
            <person name="Crowe M.L."/>
            <person name="Dalla E."/>
            <person name="Dalrymple B.P."/>
            <person name="de Bono B."/>
            <person name="Della Gatta G."/>
            <person name="di Bernardo D."/>
            <person name="Down T."/>
            <person name="Engstrom P."/>
            <person name="Fagiolini M."/>
            <person name="Faulkner G."/>
            <person name="Fletcher C.F."/>
            <person name="Fukushima T."/>
            <person name="Furuno M."/>
            <person name="Futaki S."/>
            <person name="Gariboldi M."/>
            <person name="Georgii-Hemming P."/>
            <person name="Gingeras T.R."/>
            <person name="Gojobori T."/>
            <person name="Green R.E."/>
            <person name="Gustincich S."/>
            <person name="Harbers M."/>
            <person name="Hayashi Y."/>
            <person name="Hensch T.K."/>
            <person name="Hirokawa N."/>
            <person name="Hill D."/>
            <person name="Huminiecki L."/>
            <person name="Iacono M."/>
            <person name="Ikeo K."/>
            <person name="Iwama A."/>
            <person name="Ishikawa T."/>
            <person name="Jakt M."/>
            <person name="Kanapin A."/>
            <person name="Katoh M."/>
            <person name="Kawasawa Y."/>
            <person name="Kelso J."/>
            <person name="Kitamura H."/>
            <person name="Kitano H."/>
            <person name="Kollias G."/>
            <person name="Krishnan S.P."/>
            <person name="Kruger A."/>
            <person name="Kummerfeld S.K."/>
            <person name="Kurochkin I.V."/>
            <person name="Lareau L.F."/>
            <person name="Lazarevic D."/>
            <person name="Lipovich L."/>
            <person name="Liu J."/>
            <person name="Liuni S."/>
            <person name="McWilliam S."/>
            <person name="Madan Babu M."/>
            <person name="Madera M."/>
            <person name="Marchionni L."/>
            <person name="Matsuda H."/>
            <person name="Matsuzawa S."/>
            <person name="Miki H."/>
            <person name="Mignone F."/>
            <person name="Miyake S."/>
            <person name="Morris K."/>
            <person name="Mottagui-Tabar S."/>
            <person name="Mulder N."/>
            <person name="Nakano N."/>
            <person name="Nakauchi H."/>
            <person name="Ng P."/>
            <person name="Nilsson R."/>
            <person name="Nishiguchi S."/>
            <person name="Nishikawa S."/>
            <person name="Nori F."/>
            <person name="Ohara O."/>
            <person name="Okazaki Y."/>
            <person name="Orlando V."/>
            <person name="Pang K.C."/>
            <person name="Pavan W.J."/>
            <person name="Pavesi G."/>
            <person name="Pesole G."/>
            <person name="Petrovsky N."/>
            <person name="Piazza S."/>
            <person name="Reed J."/>
            <person name="Reid J.F."/>
            <person name="Ring B.Z."/>
            <person name="Ringwald M."/>
            <person name="Rost B."/>
            <person name="Ruan Y."/>
            <person name="Salzberg S.L."/>
            <person name="Sandelin A."/>
            <person name="Schneider C."/>
            <person name="Schoenbach C."/>
            <person name="Sekiguchi K."/>
            <person name="Semple C.A."/>
            <person name="Seno S."/>
            <person name="Sessa L."/>
            <person name="Sheng Y."/>
            <person name="Shibata Y."/>
            <person name="Shimada H."/>
            <person name="Shimada K."/>
            <person name="Silva D."/>
            <person name="Sinclair B."/>
            <person name="Sperling S."/>
            <person name="Stupka E."/>
            <person name="Sugiura K."/>
            <person name="Sultana R."/>
            <person name="Takenaka Y."/>
            <person name="Taki K."/>
            <person name="Tammoja K."/>
            <person name="Tan S.L."/>
            <person name="Tang S."/>
            <person name="Taylor M.S."/>
            <person name="Tegner J."/>
            <person name="Teichmann S.A."/>
            <person name="Ueda H.R."/>
            <person name="van Nimwegen E."/>
            <person name="Verardo R."/>
            <person name="Wei C.L."/>
            <person name="Yagi K."/>
            <person name="Yamanishi H."/>
            <person name="Zabarovsky E."/>
            <person name="Zhu S."/>
            <person name="Zimmer A."/>
            <person name="Hide W."/>
            <person name="Bult C."/>
            <person name="Grimmond S.M."/>
            <person name="Teasdale R.D."/>
            <person name="Liu E.T."/>
            <person name="Brusic V."/>
            <person name="Quackenbush J."/>
            <person name="Wahlestedt C."/>
            <person name="Mattick J.S."/>
            <person name="Hume D.A."/>
            <person name="Kai C."/>
            <person name="Sasaki D."/>
            <person name="Tomaru Y."/>
            <person name="Fukuda S."/>
            <person name="Kanamori-Katayama M."/>
            <person name="Suzuki M."/>
            <person name="Aoki J."/>
            <person name="Arakawa T."/>
            <person name="Iida J."/>
            <person name="Imamura K."/>
            <person name="Itoh M."/>
            <person name="Kato T."/>
            <person name="Kawaji H."/>
            <person name="Kawagashira N."/>
            <person name="Kawashima T."/>
            <person name="Kojima M."/>
            <person name="Kondo S."/>
            <person name="Konno H."/>
            <person name="Nakano K."/>
            <person name="Ninomiya N."/>
            <person name="Nishio T."/>
            <person name="Okada M."/>
            <person name="Plessy C."/>
            <person name="Shibata K."/>
            <person name="Shiraki T."/>
            <person name="Suzuki S."/>
            <person name="Tagami M."/>
            <person name="Waki K."/>
            <person name="Watahiki A."/>
            <person name="Okamura-Oho Y."/>
            <person name="Suzuki H."/>
            <person name="Kawai J."/>
            <person name="Hayashizaki Y."/>
        </authorList>
    </citation>
    <scope>NUCLEOTIDE SEQUENCE [LARGE SCALE MRNA]</scope>
    <source>
        <strain>C57BL/6J</strain>
        <tissue>Amnion</tissue>
        <tissue>Visual cortex</tissue>
    </source>
</reference>
<reference key="3">
    <citation type="submission" date="2005-07" db="EMBL/GenBank/DDBJ databases">
        <authorList>
            <person name="Mural R.J."/>
            <person name="Adams M.D."/>
            <person name="Myers E.W."/>
            <person name="Smith H.O."/>
            <person name="Venter J.C."/>
        </authorList>
    </citation>
    <scope>NUCLEOTIDE SEQUENCE [LARGE SCALE GENOMIC DNA]</scope>
</reference>
<reference key="4">
    <citation type="journal article" date="2004" name="Genome Res.">
        <title>The status, quality, and expansion of the NIH full-length cDNA project: the Mammalian Gene Collection (MGC).</title>
        <authorList>
            <consortium name="The MGC Project Team"/>
        </authorList>
    </citation>
    <scope>NUCLEOTIDE SEQUENCE [LARGE SCALE MRNA]</scope>
    <source>
        <strain>FVB/N</strain>
        <tissue>Mammary tumor</tissue>
    </source>
</reference>
<reference key="5">
    <citation type="journal article" date="1994" name="Development">
        <title>Programmed cell death is affected in the novel mouse mutant Fused toes (Ft).</title>
        <authorList>
            <person name="van der Hoeven F."/>
            <person name="Schimmang T."/>
            <person name="Volkmann A."/>
            <person name="Mattei M.-G."/>
            <person name="Kyewski B."/>
            <person name="Ruether U."/>
        </authorList>
    </citation>
    <scope>DISEASE</scope>
</reference>
<reference key="6">
    <citation type="journal article" date="2010" name="Cell">
        <title>A tissue-specific atlas of mouse protein phosphorylation and expression.</title>
        <authorList>
            <person name="Huttlin E.L."/>
            <person name="Jedrychowski M.P."/>
            <person name="Elias J.E."/>
            <person name="Goswami T."/>
            <person name="Rad R."/>
            <person name="Beausoleil S.A."/>
            <person name="Villen J."/>
            <person name="Haas W."/>
            <person name="Sowa M.E."/>
            <person name="Gygi S.P."/>
        </authorList>
    </citation>
    <scope>PHOSPHORYLATION [LARGE SCALE ANALYSIS] AT SER-30</scope>
    <scope>IDENTIFICATION BY MASS SPECTROMETRY [LARGE SCALE ANALYSIS]</scope>
    <source>
        <tissue>Brain</tissue>
        <tissue>Brown adipose tissue</tissue>
        <tissue>Heart</tissue>
        <tissue>Kidney</tissue>
        <tissue>Liver</tissue>
        <tissue>Lung</tissue>
        <tissue>Pancreas</tissue>
    </source>
</reference>
<feature type="chain" id="PRO_0000082610" description="AKT-interacting protein">
    <location>
        <begin position="1"/>
        <end position="292"/>
    </location>
</feature>
<feature type="domain" description="UBC core" evidence="2">
    <location>
        <begin position="74"/>
        <end position="222"/>
    </location>
</feature>
<feature type="region of interest" description="Disordered" evidence="3">
    <location>
        <begin position="1"/>
        <end position="63"/>
    </location>
</feature>
<feature type="compositionally biased region" description="Basic and acidic residues" evidence="3">
    <location>
        <begin position="14"/>
        <end position="23"/>
    </location>
</feature>
<feature type="modified residue" description="Phosphoserine" evidence="7">
    <location>
        <position position="30"/>
    </location>
</feature>
<accession>Q64362</accession>
<accession>Q3TYE3</accession>
<gene>
    <name type="primary">Aktip</name>
    <name type="synonym">Fif</name>
    <name type="synonym">Ft1</name>
    <name type="synonym">Fts</name>
</gene>